<dbReference type="EMBL" id="AF031540">
    <property type="protein sequence ID" value="AAB86850.1"/>
    <property type="molecule type" value="mRNA"/>
</dbReference>
<dbReference type="SMR" id="O22642"/>
<dbReference type="GO" id="GO:0005758">
    <property type="term" value="C:mitochondrial intermembrane space"/>
    <property type="evidence" value="ECO:0007669"/>
    <property type="project" value="UniProtKB-SubCell"/>
</dbReference>
<dbReference type="GO" id="GO:0009055">
    <property type="term" value="F:electron transfer activity"/>
    <property type="evidence" value="ECO:0007669"/>
    <property type="project" value="InterPro"/>
</dbReference>
<dbReference type="GO" id="GO:0020037">
    <property type="term" value="F:heme binding"/>
    <property type="evidence" value="ECO:0007669"/>
    <property type="project" value="InterPro"/>
</dbReference>
<dbReference type="GO" id="GO:0046872">
    <property type="term" value="F:metal ion binding"/>
    <property type="evidence" value="ECO:0007669"/>
    <property type="project" value="UniProtKB-KW"/>
</dbReference>
<dbReference type="FunFam" id="1.10.760.10:FF:000001">
    <property type="entry name" value="Cytochrome c iso-1"/>
    <property type="match status" value="1"/>
</dbReference>
<dbReference type="Gene3D" id="1.10.760.10">
    <property type="entry name" value="Cytochrome c-like domain"/>
    <property type="match status" value="1"/>
</dbReference>
<dbReference type="InterPro" id="IPR009056">
    <property type="entry name" value="Cyt_c-like_dom"/>
</dbReference>
<dbReference type="InterPro" id="IPR036909">
    <property type="entry name" value="Cyt_c-like_dom_sf"/>
</dbReference>
<dbReference type="InterPro" id="IPR002327">
    <property type="entry name" value="Cyt_c_1A/1B"/>
</dbReference>
<dbReference type="PANTHER" id="PTHR11961">
    <property type="entry name" value="CYTOCHROME C"/>
    <property type="match status" value="1"/>
</dbReference>
<dbReference type="Pfam" id="PF00034">
    <property type="entry name" value="Cytochrom_C"/>
    <property type="match status" value="1"/>
</dbReference>
<dbReference type="PRINTS" id="PR00604">
    <property type="entry name" value="CYTCHRMECIAB"/>
</dbReference>
<dbReference type="SUPFAM" id="SSF46626">
    <property type="entry name" value="Cytochrome c"/>
    <property type="match status" value="1"/>
</dbReference>
<dbReference type="PROSITE" id="PS51007">
    <property type="entry name" value="CYTC"/>
    <property type="match status" value="1"/>
</dbReference>
<gene>
    <name type="primary">CYTC</name>
</gene>
<evidence type="ECO:0000250" key="1"/>
<evidence type="ECO:0000255" key="2">
    <source>
        <dbReference type="PROSITE-ProRule" id="PRU00433"/>
    </source>
</evidence>
<evidence type="ECO:0000305" key="3"/>
<sequence>MASFSEAPPGDFKSGEKIFKTKCAQCHTVDKGAGHKQGPNLNGLFGRQSGTTAGYSYSAANKNKAVNWDENTLYDYLLNPKKYIPGTKMVFPGLKKPQDRADLIAYLKEATSS</sequence>
<comment type="function">
    <text>Electron carrier protein. The oxidized form of the cytochrome c heme group can accept an electron from the heme group of the cytochrome c1 subunit of cytochrome reductase. Cytochrome c then transfers this electron to the cytochrome oxidase complex, the final protein carrier in the mitochondrial electron-transport chain.</text>
</comment>
<comment type="subcellular location">
    <subcellularLocation>
        <location>Mitochondrion intermembrane space</location>
    </subcellularLocation>
    <text>Loosely associated with the inner membrane.</text>
</comment>
<comment type="PTM">
    <text>Binds 1 heme c group covalently per subunit.</text>
</comment>
<comment type="similarity">
    <text evidence="3">Belongs to the cytochrome c family.</text>
</comment>
<comment type="online information" name="Protein Spotlight">
    <link uri="https://www.proteinspotlight.org/back_issues/076"/>
    <text>Life shuttle - Issue 76 of November 2006</text>
</comment>
<proteinExistence type="inferred from homology"/>
<name>CYC_FRIAG</name>
<reference key="1">
    <citation type="submission" date="1997-10" db="EMBL/GenBank/DDBJ databases">
        <authorList>
            <person name="Prabhavalkar D.S."/>
            <person name="Baysdorfer C."/>
        </authorList>
    </citation>
    <scope>NUCLEOTIDE SEQUENCE [MRNA]</scope>
</reference>
<accession>O22642</accession>
<feature type="initiator methionine" description="Removed" evidence="1">
    <location>
        <position position="1"/>
    </location>
</feature>
<feature type="chain" id="PRO_0000108295" description="Cytochrome c">
    <location>
        <begin position="2"/>
        <end position="113"/>
    </location>
</feature>
<feature type="binding site" description="covalent" evidence="2">
    <location>
        <position position="23"/>
    </location>
    <ligand>
        <name>heme c</name>
        <dbReference type="ChEBI" id="CHEBI:61717"/>
    </ligand>
</feature>
<feature type="binding site" description="covalent" evidence="2">
    <location>
        <position position="26"/>
    </location>
    <ligand>
        <name>heme c</name>
        <dbReference type="ChEBI" id="CHEBI:61717"/>
    </ligand>
</feature>
<feature type="binding site" description="axial binding residue" evidence="2">
    <location>
        <position position="27"/>
    </location>
    <ligand>
        <name>heme c</name>
        <dbReference type="ChEBI" id="CHEBI:61717"/>
    </ligand>
    <ligandPart>
        <name>Fe</name>
        <dbReference type="ChEBI" id="CHEBI:18248"/>
    </ligandPart>
</feature>
<feature type="binding site" description="axial binding residue" evidence="2">
    <location>
        <position position="89"/>
    </location>
    <ligand>
        <name>heme c</name>
        <dbReference type="ChEBI" id="CHEBI:61717"/>
    </ligand>
    <ligandPart>
        <name>Fe</name>
        <dbReference type="ChEBI" id="CHEBI:18248"/>
    </ligandPart>
</feature>
<feature type="modified residue" description="N-acetylalanine" evidence="1">
    <location>
        <position position="2"/>
    </location>
</feature>
<feature type="modified residue" description="N6,N6,N6-trimethyllysine" evidence="1">
    <location>
        <position position="81"/>
    </location>
</feature>
<feature type="modified residue" description="N6,N6,N6-trimethyllysine" evidence="1">
    <location>
        <position position="95"/>
    </location>
</feature>
<keyword id="KW-0007">Acetylation</keyword>
<keyword id="KW-0249">Electron transport</keyword>
<keyword id="KW-0349">Heme</keyword>
<keyword id="KW-0408">Iron</keyword>
<keyword id="KW-0479">Metal-binding</keyword>
<keyword id="KW-0488">Methylation</keyword>
<keyword id="KW-0496">Mitochondrion</keyword>
<keyword id="KW-0679">Respiratory chain</keyword>
<keyword id="KW-0813">Transport</keyword>
<protein>
    <recommendedName>
        <fullName>Cytochrome c</fullName>
    </recommendedName>
</protein>
<organism>
    <name type="scientific">Fritillaria agrestis</name>
    <name type="common">Stinkbells</name>
    <dbReference type="NCBI Taxonomy" id="64177"/>
    <lineage>
        <taxon>Eukaryota</taxon>
        <taxon>Viridiplantae</taxon>
        <taxon>Streptophyta</taxon>
        <taxon>Embryophyta</taxon>
        <taxon>Tracheophyta</taxon>
        <taxon>Spermatophyta</taxon>
        <taxon>Magnoliopsida</taxon>
        <taxon>Liliopsida</taxon>
        <taxon>Liliales</taxon>
        <taxon>Liliaceae</taxon>
        <taxon>Fritillaria</taxon>
    </lineage>
</organism>